<organism>
    <name type="scientific">Panagrellus redivivus</name>
    <name type="common">Microworm</name>
    <dbReference type="NCBI Taxonomy" id="6233"/>
    <lineage>
        <taxon>Eukaryota</taxon>
        <taxon>Metazoa</taxon>
        <taxon>Ecdysozoa</taxon>
        <taxon>Nematoda</taxon>
        <taxon>Chromadorea</taxon>
        <taxon>Rhabditida</taxon>
        <taxon>Tylenchina</taxon>
        <taxon>Panagrolaimomorpha</taxon>
        <taxon>Panagrolaimoidea</taxon>
        <taxon>Panagrolaimidae</taxon>
        <taxon>Panagrellus</taxon>
    </lineage>
</organism>
<name>FAR3_PANRE</name>
<proteinExistence type="evidence at protein level"/>
<feature type="peptide" id="PRO_0000043708" description="FMRFamide-like neuropeptide PF3">
    <location>
        <begin position="1"/>
        <end position="7"/>
    </location>
</feature>
<feature type="modified residue" description="Phenylalanine amide" evidence="1">
    <location>
        <position position="7"/>
    </location>
</feature>
<evidence type="ECO:0000269" key="1">
    <source>
    </source>
</evidence>
<evidence type="ECO:0000305" key="2"/>
<accession>P41874</accession>
<reference key="1">
    <citation type="journal article" date="1994" name="Biochem. Biophys. Res. Commun.">
        <title>KSAYMRFamide: a novel FMRFamide-related heptapeptide from the free-living nematode, Panagrellus redivivus, which is myoactive in the parasitic nematode, Ascaris suum.</title>
        <authorList>
            <person name="Maule A.G."/>
            <person name="Shaw C."/>
            <person name="Bowman J.W."/>
            <person name="Halton D.W."/>
            <person name="Thompson D.P."/>
            <person name="Geary T.G."/>
            <person name="Thim L."/>
        </authorList>
    </citation>
    <scope>PROTEIN SEQUENCE</scope>
    <scope>AMIDATION AT PHE-7</scope>
    <scope>SYNTHESIS</scope>
</reference>
<sequence length="7" mass="902">KSAYMRF</sequence>
<protein>
    <recommendedName>
        <fullName>FMRFamide-like neuropeptide PF3</fullName>
    </recommendedName>
    <alternativeName>
        <fullName>KSAYMRF-amide</fullName>
    </alternativeName>
</protein>
<keyword id="KW-0027">Amidation</keyword>
<keyword id="KW-0903">Direct protein sequencing</keyword>
<keyword id="KW-0527">Neuropeptide</keyword>
<keyword id="KW-1185">Reference proteome</keyword>
<keyword id="KW-0964">Secreted</keyword>
<dbReference type="PIR" id="PC2132">
    <property type="entry name" value="PC2132"/>
</dbReference>
<dbReference type="Proteomes" id="UP000492821">
    <property type="component" value="Unplaced"/>
</dbReference>
<dbReference type="GO" id="GO:0005576">
    <property type="term" value="C:extracellular region"/>
    <property type="evidence" value="ECO:0007669"/>
    <property type="project" value="UniProtKB-SubCell"/>
</dbReference>
<dbReference type="GO" id="GO:0007218">
    <property type="term" value="P:neuropeptide signaling pathway"/>
    <property type="evidence" value="ECO:0007669"/>
    <property type="project" value="UniProtKB-KW"/>
</dbReference>
<comment type="function">
    <text>Myoactive; induces a rapid concentration-dependent muscle tension increase.</text>
</comment>
<comment type="subcellular location">
    <subcellularLocation>
        <location>Secreted</location>
    </subcellularLocation>
</comment>
<comment type="similarity">
    <text evidence="2">Belongs to the FARP (FMRFamide related peptide) family.</text>
</comment>